<comment type="subcellular location">
    <subcellularLocation>
        <location evidence="1">Cytoplasm</location>
    </subcellularLocation>
</comment>
<comment type="similarity">
    <text evidence="1">Belongs to the UPF0298 family.</text>
</comment>
<comment type="sequence caution" evidence="2">
    <conflict type="erroneous initiation">
        <sequence resource="EMBL-CDS" id="AAT56145"/>
    </conflict>
</comment>
<evidence type="ECO:0000255" key="1">
    <source>
        <dbReference type="HAMAP-Rule" id="MF_01126"/>
    </source>
</evidence>
<evidence type="ECO:0000305" key="2"/>
<sequence length="88" mass="10796">MFGQRQSMIVYLHSLKHAKILRKYGNIHYISKRLKYAVVYCDMEQIEHMMQKLNKLPFVKKIEQSYRPYLKTEFENSRPDRAKEYDYS</sequence>
<dbReference type="EMBL" id="AE016879">
    <property type="protein sequence ID" value="AAP27866.1"/>
    <property type="molecule type" value="Genomic_DNA"/>
</dbReference>
<dbReference type="EMBL" id="AE017334">
    <property type="protein sequence ID" value="AAT35409.1"/>
    <property type="molecule type" value="Genomic_DNA"/>
</dbReference>
<dbReference type="EMBL" id="AE017225">
    <property type="protein sequence ID" value="AAT56145.1"/>
    <property type="status" value="ALT_INIT"/>
    <property type="molecule type" value="Genomic_DNA"/>
</dbReference>
<dbReference type="RefSeq" id="NP_846380.1">
    <property type="nucleotide sequence ID" value="NC_003997.3"/>
</dbReference>
<dbReference type="RefSeq" id="WP_002080814.1">
    <property type="nucleotide sequence ID" value="NZ_WXXJ01000027.1"/>
</dbReference>
<dbReference type="SMR" id="Q81W41"/>
<dbReference type="STRING" id="261594.GBAA_4142"/>
<dbReference type="DNASU" id="1088413"/>
<dbReference type="KEGG" id="ban:BA_4142"/>
<dbReference type="KEGG" id="bar:GBAA_4142"/>
<dbReference type="KEGG" id="bat:BAS3844"/>
<dbReference type="PATRIC" id="fig|198094.11.peg.4113"/>
<dbReference type="eggNOG" id="COG4471">
    <property type="taxonomic scope" value="Bacteria"/>
</dbReference>
<dbReference type="HOGENOM" id="CLU_159890_2_0_9"/>
<dbReference type="OMA" id="KEYDYKM"/>
<dbReference type="OrthoDB" id="2990788at2"/>
<dbReference type="Proteomes" id="UP000000427">
    <property type="component" value="Chromosome"/>
</dbReference>
<dbReference type="Proteomes" id="UP000000594">
    <property type="component" value="Chromosome"/>
</dbReference>
<dbReference type="GO" id="GO:0005737">
    <property type="term" value="C:cytoplasm"/>
    <property type="evidence" value="ECO:0007669"/>
    <property type="project" value="UniProtKB-SubCell"/>
</dbReference>
<dbReference type="HAMAP" id="MF_01126">
    <property type="entry name" value="UPF0298"/>
    <property type="match status" value="1"/>
</dbReference>
<dbReference type="InterPro" id="IPR016979">
    <property type="entry name" value="DUF2129"/>
</dbReference>
<dbReference type="NCBIfam" id="NF002777">
    <property type="entry name" value="PRK02886.1"/>
    <property type="match status" value="1"/>
</dbReference>
<dbReference type="Pfam" id="PF09902">
    <property type="entry name" value="DUF2129"/>
    <property type="match status" value="1"/>
</dbReference>
<dbReference type="PIRSF" id="PIRSF031653">
    <property type="entry name" value="UCP031653"/>
    <property type="match status" value="1"/>
</dbReference>
<protein>
    <recommendedName>
        <fullName evidence="1">UPF0298 protein BA_4142/GBAA_4142/BAS3844</fullName>
    </recommendedName>
</protein>
<proteinExistence type="inferred from homology"/>
<keyword id="KW-0963">Cytoplasm</keyword>
<keyword id="KW-1185">Reference proteome</keyword>
<name>Y4142_BACAN</name>
<feature type="chain" id="PRO_0000074649" description="UPF0298 protein BA_4142/GBAA_4142/BAS3844">
    <location>
        <begin position="1"/>
        <end position="88"/>
    </location>
</feature>
<reference key="1">
    <citation type="journal article" date="2003" name="Nature">
        <title>The genome sequence of Bacillus anthracis Ames and comparison to closely related bacteria.</title>
        <authorList>
            <person name="Read T.D."/>
            <person name="Peterson S.N."/>
            <person name="Tourasse N.J."/>
            <person name="Baillie L.W."/>
            <person name="Paulsen I.T."/>
            <person name="Nelson K.E."/>
            <person name="Tettelin H."/>
            <person name="Fouts D.E."/>
            <person name="Eisen J.A."/>
            <person name="Gill S.R."/>
            <person name="Holtzapple E.K."/>
            <person name="Okstad O.A."/>
            <person name="Helgason E."/>
            <person name="Rilstone J."/>
            <person name="Wu M."/>
            <person name="Kolonay J.F."/>
            <person name="Beanan M.J."/>
            <person name="Dodson R.J."/>
            <person name="Brinkac L.M."/>
            <person name="Gwinn M.L."/>
            <person name="DeBoy R.T."/>
            <person name="Madpu R."/>
            <person name="Daugherty S.C."/>
            <person name="Durkin A.S."/>
            <person name="Haft D.H."/>
            <person name="Nelson W.C."/>
            <person name="Peterson J.D."/>
            <person name="Pop M."/>
            <person name="Khouri H.M."/>
            <person name="Radune D."/>
            <person name="Benton J.L."/>
            <person name="Mahamoud Y."/>
            <person name="Jiang L."/>
            <person name="Hance I.R."/>
            <person name="Weidman J.F."/>
            <person name="Berry K.J."/>
            <person name="Plaut R.D."/>
            <person name="Wolf A.M."/>
            <person name="Watkins K.L."/>
            <person name="Nierman W.C."/>
            <person name="Hazen A."/>
            <person name="Cline R.T."/>
            <person name="Redmond C."/>
            <person name="Thwaite J.E."/>
            <person name="White O."/>
            <person name="Salzberg S.L."/>
            <person name="Thomason B."/>
            <person name="Friedlander A.M."/>
            <person name="Koehler T.M."/>
            <person name="Hanna P.C."/>
            <person name="Kolstoe A.-B."/>
            <person name="Fraser C.M."/>
        </authorList>
    </citation>
    <scope>NUCLEOTIDE SEQUENCE [LARGE SCALE GENOMIC DNA]</scope>
    <source>
        <strain>Ames / isolate Porton</strain>
    </source>
</reference>
<reference key="2">
    <citation type="journal article" date="2009" name="J. Bacteriol.">
        <title>The complete genome sequence of Bacillus anthracis Ames 'Ancestor'.</title>
        <authorList>
            <person name="Ravel J."/>
            <person name="Jiang L."/>
            <person name="Stanley S.T."/>
            <person name="Wilson M.R."/>
            <person name="Decker R.S."/>
            <person name="Read T.D."/>
            <person name="Worsham P."/>
            <person name="Keim P.S."/>
            <person name="Salzberg S.L."/>
            <person name="Fraser-Liggett C.M."/>
            <person name="Rasko D.A."/>
        </authorList>
    </citation>
    <scope>NUCLEOTIDE SEQUENCE [LARGE SCALE GENOMIC DNA]</scope>
    <source>
        <strain>Ames ancestor</strain>
    </source>
</reference>
<reference key="3">
    <citation type="submission" date="2004-01" db="EMBL/GenBank/DDBJ databases">
        <title>Complete genome sequence of Bacillus anthracis Sterne.</title>
        <authorList>
            <person name="Brettin T.S."/>
            <person name="Bruce D."/>
            <person name="Challacombe J.F."/>
            <person name="Gilna P."/>
            <person name="Han C."/>
            <person name="Hill K."/>
            <person name="Hitchcock P."/>
            <person name="Jackson P."/>
            <person name="Keim P."/>
            <person name="Longmire J."/>
            <person name="Lucas S."/>
            <person name="Okinaka R."/>
            <person name="Richardson P."/>
            <person name="Rubin E."/>
            <person name="Tice H."/>
        </authorList>
    </citation>
    <scope>NUCLEOTIDE SEQUENCE [LARGE SCALE GENOMIC DNA]</scope>
    <source>
        <strain>Sterne</strain>
    </source>
</reference>
<gene>
    <name type="ordered locus">BA_4142</name>
    <name type="ordered locus">GBAA_4142</name>
    <name type="ordered locus">BAS3844</name>
</gene>
<organism>
    <name type="scientific">Bacillus anthracis</name>
    <dbReference type="NCBI Taxonomy" id="1392"/>
    <lineage>
        <taxon>Bacteria</taxon>
        <taxon>Bacillati</taxon>
        <taxon>Bacillota</taxon>
        <taxon>Bacilli</taxon>
        <taxon>Bacillales</taxon>
        <taxon>Bacillaceae</taxon>
        <taxon>Bacillus</taxon>
        <taxon>Bacillus cereus group</taxon>
    </lineage>
</organism>
<accession>Q81W41</accession>
<accession>Q6HU94</accession>
<accession>Q6KJ09</accession>